<reference key="1">
    <citation type="submission" date="1995-04" db="EMBL/GenBank/DDBJ databases">
        <authorList>
            <person name="Novoradovsky A."/>
            <person name="Goldman D."/>
        </authorList>
    </citation>
    <scope>NUCLEOTIDE SEQUENCE [MRNA]</scope>
    <source>
        <strain>DBA/2J</strain>
    </source>
</reference>
<reference key="2">
    <citation type="journal article" date="2009" name="PLoS Biol.">
        <title>Lineage-specific biology revealed by a finished genome assembly of the mouse.</title>
        <authorList>
            <person name="Church D.M."/>
            <person name="Goodstadt L."/>
            <person name="Hillier L.W."/>
            <person name="Zody M.C."/>
            <person name="Goldstein S."/>
            <person name="She X."/>
            <person name="Bult C.J."/>
            <person name="Agarwala R."/>
            <person name="Cherry J.L."/>
            <person name="DiCuccio M."/>
            <person name="Hlavina W."/>
            <person name="Kapustin Y."/>
            <person name="Meric P."/>
            <person name="Maglott D."/>
            <person name="Birtle Z."/>
            <person name="Marques A.C."/>
            <person name="Graves T."/>
            <person name="Zhou S."/>
            <person name="Teague B."/>
            <person name="Potamousis K."/>
            <person name="Churas C."/>
            <person name="Place M."/>
            <person name="Herschleb J."/>
            <person name="Runnheim R."/>
            <person name="Forrest D."/>
            <person name="Amos-Landgraf J."/>
            <person name="Schwartz D.C."/>
            <person name="Cheng Z."/>
            <person name="Lindblad-Toh K."/>
            <person name="Eichler E.E."/>
            <person name="Ponting C.P."/>
        </authorList>
    </citation>
    <scope>NUCLEOTIDE SEQUENCE [LARGE SCALE GENOMIC DNA]</scope>
    <source>
        <strain>C57BL/6J</strain>
    </source>
</reference>
<reference key="3">
    <citation type="journal article" date="2010" name="Cell">
        <title>A tissue-specific atlas of mouse protein phosphorylation and expression.</title>
        <authorList>
            <person name="Huttlin E.L."/>
            <person name="Jedrychowski M.P."/>
            <person name="Elias J.E."/>
            <person name="Goswami T."/>
            <person name="Rad R."/>
            <person name="Beausoleil S.A."/>
            <person name="Villen J."/>
            <person name="Haas W."/>
            <person name="Sowa M.E."/>
            <person name="Gygi S.P."/>
        </authorList>
    </citation>
    <scope>IDENTIFICATION BY MASS SPECTROMETRY [LARGE SCALE ANALYSIS]</scope>
    <source>
        <tissue>Liver</tissue>
    </source>
</reference>
<dbReference type="EC" id="1.13.11.11" evidence="2"/>
<dbReference type="EMBL" id="U24493">
    <property type="protein sequence ID" value="AAB60491.1"/>
    <property type="molecule type" value="mRNA"/>
</dbReference>
<dbReference type="EMBL" id="AC159260">
    <property type="status" value="NOT_ANNOTATED_CDS"/>
    <property type="molecule type" value="Genomic_DNA"/>
</dbReference>
<dbReference type="CCDS" id="CCDS17427.1"/>
<dbReference type="RefSeq" id="NP_064295.2">
    <property type="nucleotide sequence ID" value="NM_019911.2"/>
</dbReference>
<dbReference type="SMR" id="P48776"/>
<dbReference type="FunCoup" id="P48776">
    <property type="interactions" value="194"/>
</dbReference>
<dbReference type="STRING" id="10090.ENSMUSP00000029645"/>
<dbReference type="BindingDB" id="P48776"/>
<dbReference type="ChEMBL" id="CHEMBL1075307"/>
<dbReference type="GuidetoPHARMACOLOGY" id="2887"/>
<dbReference type="GlyGen" id="P48776">
    <property type="glycosylation" value="1 site, 1 O-linked glycan (1 site)"/>
</dbReference>
<dbReference type="iPTMnet" id="P48776"/>
<dbReference type="PhosphoSitePlus" id="P48776"/>
<dbReference type="SwissPalm" id="P48776"/>
<dbReference type="jPOST" id="P48776"/>
<dbReference type="PaxDb" id="10090-ENSMUSP00000029645"/>
<dbReference type="ProteomicsDB" id="263232"/>
<dbReference type="Antibodypedia" id="28079">
    <property type="antibodies" value="330 antibodies from 26 providers"/>
</dbReference>
<dbReference type="DNASU" id="56720"/>
<dbReference type="Ensembl" id="ENSMUST00000029645.14">
    <property type="protein sequence ID" value="ENSMUSP00000029645.9"/>
    <property type="gene ID" value="ENSMUSG00000028011.17"/>
</dbReference>
<dbReference type="GeneID" id="56720"/>
<dbReference type="KEGG" id="mmu:56720"/>
<dbReference type="UCSC" id="uc008poo.1">
    <property type="organism name" value="mouse"/>
</dbReference>
<dbReference type="AGR" id="MGI:1928486"/>
<dbReference type="CTD" id="6999"/>
<dbReference type="MGI" id="MGI:1928486">
    <property type="gene designation" value="Tdo2"/>
</dbReference>
<dbReference type="VEuPathDB" id="HostDB:ENSMUSG00000028011"/>
<dbReference type="eggNOG" id="KOG3906">
    <property type="taxonomic scope" value="Eukaryota"/>
</dbReference>
<dbReference type="GeneTree" id="ENSGT00390000008593"/>
<dbReference type="InParanoid" id="P48776"/>
<dbReference type="OMA" id="WRWRNDH"/>
<dbReference type="OrthoDB" id="447477at2759"/>
<dbReference type="PhylomeDB" id="P48776"/>
<dbReference type="TreeFam" id="TF105827"/>
<dbReference type="BRENDA" id="1.13.11.11">
    <property type="organism ID" value="3474"/>
</dbReference>
<dbReference type="BRENDA" id="1.13.11.52">
    <property type="organism ID" value="3474"/>
</dbReference>
<dbReference type="Reactome" id="R-MMU-71240">
    <property type="pathway name" value="Tryptophan catabolism"/>
</dbReference>
<dbReference type="SABIO-RK" id="P48776"/>
<dbReference type="UniPathway" id="UPA00333">
    <property type="reaction ID" value="UER00453"/>
</dbReference>
<dbReference type="BioGRID-ORCS" id="56720">
    <property type="hits" value="0 hits in 80 CRISPR screens"/>
</dbReference>
<dbReference type="ChiTaRS" id="Tdo2">
    <property type="organism name" value="mouse"/>
</dbReference>
<dbReference type="PRO" id="PR:P48776"/>
<dbReference type="Proteomes" id="UP000000589">
    <property type="component" value="Chromosome 3"/>
</dbReference>
<dbReference type="RNAct" id="P48776">
    <property type="molecule type" value="protein"/>
</dbReference>
<dbReference type="Bgee" id="ENSMUSG00000028011">
    <property type="expression patterns" value="Expressed in gastrula and 78 other cell types or tissues"/>
</dbReference>
<dbReference type="ExpressionAtlas" id="P48776">
    <property type="expression patterns" value="baseline and differential"/>
</dbReference>
<dbReference type="GO" id="GO:0016597">
    <property type="term" value="F:amino acid binding"/>
    <property type="evidence" value="ECO:0007669"/>
    <property type="project" value="Ensembl"/>
</dbReference>
<dbReference type="GO" id="GO:0020037">
    <property type="term" value="F:heme binding"/>
    <property type="evidence" value="ECO:0000250"/>
    <property type="project" value="UniProtKB"/>
</dbReference>
<dbReference type="GO" id="GO:0042802">
    <property type="term" value="F:identical protein binding"/>
    <property type="evidence" value="ECO:0007669"/>
    <property type="project" value="Ensembl"/>
</dbReference>
<dbReference type="GO" id="GO:0046872">
    <property type="term" value="F:metal ion binding"/>
    <property type="evidence" value="ECO:0007669"/>
    <property type="project" value="UniProtKB-KW"/>
</dbReference>
<dbReference type="GO" id="GO:0019825">
    <property type="term" value="F:oxygen binding"/>
    <property type="evidence" value="ECO:0007669"/>
    <property type="project" value="Ensembl"/>
</dbReference>
<dbReference type="GO" id="GO:0004833">
    <property type="term" value="F:tryptophan 2,3-dioxygenase activity"/>
    <property type="evidence" value="ECO:0000250"/>
    <property type="project" value="UniProtKB"/>
</dbReference>
<dbReference type="GO" id="GO:0019442">
    <property type="term" value="P:L-tryptophan catabolic process to acetyl-CoA"/>
    <property type="evidence" value="ECO:0007669"/>
    <property type="project" value="Ensembl"/>
</dbReference>
<dbReference type="GO" id="GO:0019441">
    <property type="term" value="P:L-tryptophan catabolic process to kynurenine"/>
    <property type="evidence" value="ECO:0000250"/>
    <property type="project" value="UniProtKB"/>
</dbReference>
<dbReference type="GO" id="GO:0051289">
    <property type="term" value="P:protein homotetramerization"/>
    <property type="evidence" value="ECO:0000250"/>
    <property type="project" value="UniProtKB"/>
</dbReference>
<dbReference type="GO" id="GO:1904842">
    <property type="term" value="P:response to nitroglycerin"/>
    <property type="evidence" value="ECO:0007669"/>
    <property type="project" value="Ensembl"/>
</dbReference>
<dbReference type="FunFam" id="1.10.287.3810:FF:000001">
    <property type="entry name" value="Tryptophan 2,3-dioxygenase"/>
    <property type="match status" value="1"/>
</dbReference>
<dbReference type="Gene3D" id="1.10.287.3810">
    <property type="match status" value="1"/>
</dbReference>
<dbReference type="Gene3D" id="1.20.58.480">
    <property type="match status" value="1"/>
</dbReference>
<dbReference type="HAMAP" id="MF_01972">
    <property type="entry name" value="T23O"/>
    <property type="match status" value="1"/>
</dbReference>
<dbReference type="InterPro" id="IPR037217">
    <property type="entry name" value="Trp/Indoleamine_2_3_dOase-like"/>
</dbReference>
<dbReference type="InterPro" id="IPR004981">
    <property type="entry name" value="Trp_2_3_dOase"/>
</dbReference>
<dbReference type="PANTHER" id="PTHR10138">
    <property type="entry name" value="TRYPTOPHAN 2,3-DIOXYGENASE"/>
    <property type="match status" value="1"/>
</dbReference>
<dbReference type="PANTHER" id="PTHR10138:SF0">
    <property type="entry name" value="TRYPTOPHAN 2,3-DIOXYGENASE"/>
    <property type="match status" value="1"/>
</dbReference>
<dbReference type="Pfam" id="PF03301">
    <property type="entry name" value="Trp_dioxygenase"/>
    <property type="match status" value="1"/>
</dbReference>
<dbReference type="SUPFAM" id="SSF140959">
    <property type="entry name" value="Indolic compounds 2,3-dioxygenase-like"/>
    <property type="match status" value="1"/>
</dbReference>
<feature type="chain" id="PRO_0000072400" description="Tryptophan 2,3-dioxygenase">
    <location>
        <begin position="1"/>
        <end position="406"/>
    </location>
</feature>
<feature type="binding site" evidence="2">
    <location>
        <begin position="72"/>
        <end position="76"/>
    </location>
    <ligand>
        <name>substrate</name>
    </ligand>
</feature>
<feature type="binding site" evidence="2">
    <location>
        <position position="144"/>
    </location>
    <ligand>
        <name>substrate</name>
    </ligand>
</feature>
<feature type="binding site" description="axial binding residue" evidence="2">
    <location>
        <position position="328"/>
    </location>
    <ligand>
        <name>heme</name>
        <dbReference type="ChEBI" id="CHEBI:30413"/>
    </ligand>
    <ligandPart>
        <name>Fe</name>
        <dbReference type="ChEBI" id="CHEBI:18248"/>
    </ligandPart>
</feature>
<feature type="binding site" evidence="2">
    <location>
        <position position="342"/>
    </location>
    <ligand>
        <name>substrate</name>
    </ligand>
</feature>
<feature type="modified residue" description="Phosphoserine" evidence="1">
    <location>
        <position position="19"/>
    </location>
</feature>
<feature type="sequence conflict" description="In Ref. 1; AAB60491." evidence="3" ref="1">
    <original>V</original>
    <variation>L</variation>
    <location>
        <position position="18"/>
    </location>
</feature>
<feature type="sequence conflict" description="In Ref. 1; AAB60491." evidence="3" ref="1">
    <original>N</original>
    <variation>K</variation>
    <location>
        <position position="229"/>
    </location>
</feature>
<feature type="sequence conflict" description="In Ref. 1; AAB60491." evidence="3" ref="1">
    <original>R</original>
    <variation>K</variation>
    <location>
        <position position="240"/>
    </location>
</feature>
<feature type="sequence conflict" description="In Ref. 1; AAB60491." evidence="3" ref="1">
    <original>T</original>
    <variation>K</variation>
    <location>
        <position position="245"/>
    </location>
</feature>
<sequence>MSGCPFAGNSVGYTLKNVSMEDNEEDRAQTGVNRASKGGLIYGNYLQLEKILNAQELQSEVKGNKIHDEHLFIITHQAYELWFKQILWELDSVREIFQNGHVRDERNMLKVIARMHRVVVIFKLLVQQFSVLETMTALDFNDFREYLSPASGFQSLQFRLLENKIGVLQSLRVPYNRKHYRDNFGGDYNELLLKSEQEQTLLQLVEAWLERTPGLEPNGFNFWGKFEKNILKGLEEEFLRIQAKTDSEEKEEQMAEFRKQKEVLLCLFDEKRHDYLLSKGERRLSYRALQGALMIYFYREEPRFQVPFQLLTSLMDIDTLMTKWRYNHVCMVHRMLGTKAGTGGSSGYHYLRSTVSDRYKVFVDLFNLSTYLVPRHWVPKMNPIIHKFLYTAEYSDSSYFSSDESD</sequence>
<protein>
    <recommendedName>
        <fullName evidence="2">Tryptophan 2,3-dioxygenase</fullName>
        <shortName evidence="2">TDO</shortName>
        <ecNumber evidence="2">1.13.11.11</ecNumber>
    </recommendedName>
    <alternativeName>
        <fullName evidence="2">Tryptamin 2,3-dioxygenase</fullName>
    </alternativeName>
    <alternativeName>
        <fullName evidence="2">Tryptophan oxygenase</fullName>
        <shortName evidence="2">TO</shortName>
        <shortName evidence="2">TRPO</shortName>
    </alternativeName>
    <alternativeName>
        <fullName evidence="2">Tryptophan pyrrolase</fullName>
    </alternativeName>
    <alternativeName>
        <fullName evidence="2">Tryptophanase</fullName>
    </alternativeName>
</protein>
<evidence type="ECO:0000250" key="1">
    <source>
        <dbReference type="UniProtKB" id="P21643"/>
    </source>
</evidence>
<evidence type="ECO:0000255" key="2">
    <source>
        <dbReference type="HAMAP-Rule" id="MF_03020"/>
    </source>
</evidence>
<evidence type="ECO:0000305" key="3"/>
<comment type="function">
    <text evidence="2">Heme-dependent dioxygenase that catalyzes the oxidative cleavage of the L-tryptophan (L-Trp) pyrrole ring and converts L-tryptophan to N-formyl-L-kynurenine. Catalyzes the oxidative cleavage of the indole moiety.</text>
</comment>
<comment type="catalytic activity">
    <reaction evidence="2">
        <text>L-tryptophan + O2 = N-formyl-L-kynurenine</text>
        <dbReference type="Rhea" id="RHEA:24536"/>
        <dbReference type="ChEBI" id="CHEBI:15379"/>
        <dbReference type="ChEBI" id="CHEBI:57912"/>
        <dbReference type="ChEBI" id="CHEBI:58629"/>
        <dbReference type="EC" id="1.13.11.11"/>
    </reaction>
</comment>
<comment type="cofactor">
    <cofactor evidence="2">
        <name>heme</name>
        <dbReference type="ChEBI" id="CHEBI:30413"/>
    </cofactor>
    <text evidence="2">Binds 1 heme group per subunit.</text>
</comment>
<comment type="pathway">
    <text evidence="2">Amino-acid degradation; L-tryptophan degradation via kynurenine pathway; L-kynurenine from L-tryptophan: step 1/2.</text>
</comment>
<comment type="subunit">
    <text evidence="2">Homotetramer. Dimer of dimers.</text>
</comment>
<comment type="similarity">
    <text evidence="2">Belongs to the tryptophan 2,3-dioxygenase family.</text>
</comment>
<gene>
    <name evidence="2" type="primary">Tdo2</name>
    <name type="synonym">Tdo</name>
</gene>
<organism>
    <name type="scientific">Mus musculus</name>
    <name type="common">Mouse</name>
    <dbReference type="NCBI Taxonomy" id="10090"/>
    <lineage>
        <taxon>Eukaryota</taxon>
        <taxon>Metazoa</taxon>
        <taxon>Chordata</taxon>
        <taxon>Craniata</taxon>
        <taxon>Vertebrata</taxon>
        <taxon>Euteleostomi</taxon>
        <taxon>Mammalia</taxon>
        <taxon>Eutheria</taxon>
        <taxon>Euarchontoglires</taxon>
        <taxon>Glires</taxon>
        <taxon>Rodentia</taxon>
        <taxon>Myomorpha</taxon>
        <taxon>Muroidea</taxon>
        <taxon>Muridae</taxon>
        <taxon>Murinae</taxon>
        <taxon>Mus</taxon>
        <taxon>Mus</taxon>
    </lineage>
</organism>
<keyword id="KW-0223">Dioxygenase</keyword>
<keyword id="KW-0349">Heme</keyword>
<keyword id="KW-0408">Iron</keyword>
<keyword id="KW-0479">Metal-binding</keyword>
<keyword id="KW-0560">Oxidoreductase</keyword>
<keyword id="KW-0597">Phosphoprotein</keyword>
<keyword id="KW-1185">Reference proteome</keyword>
<keyword id="KW-0823">Tryptophan catabolism</keyword>
<proteinExistence type="evidence at protein level"/>
<name>T23O_MOUSE</name>
<accession>P48776</accession>